<protein>
    <recommendedName>
        <fullName>Electrin-4</fullName>
    </recommendedName>
</protein>
<keyword id="KW-0027">Amidation</keyword>
<keyword id="KW-0878">Amphibian defense peptide</keyword>
<keyword id="KW-0903">Direct protein sequencing</keyword>
<keyword id="KW-0964">Secreted</keyword>
<organism>
    <name type="scientific">Litoria rubella</name>
    <name type="common">Desert tree frog</name>
    <name type="synonym">Hyla rubella</name>
    <dbReference type="NCBI Taxonomy" id="104895"/>
    <lineage>
        <taxon>Eukaryota</taxon>
        <taxon>Metazoa</taxon>
        <taxon>Chordata</taxon>
        <taxon>Craniata</taxon>
        <taxon>Vertebrata</taxon>
        <taxon>Euteleostomi</taxon>
        <taxon>Amphibia</taxon>
        <taxon>Batrachia</taxon>
        <taxon>Anura</taxon>
        <taxon>Neobatrachia</taxon>
        <taxon>Hyloidea</taxon>
        <taxon>Hylidae</taxon>
        <taxon>Pelodryadinae</taxon>
        <taxon>Litoria</taxon>
    </lineage>
</organism>
<dbReference type="GO" id="GO:0005576">
    <property type="term" value="C:extracellular region"/>
    <property type="evidence" value="ECO:0007669"/>
    <property type="project" value="UniProtKB-SubCell"/>
</dbReference>
<dbReference type="GO" id="GO:0006952">
    <property type="term" value="P:defense response"/>
    <property type="evidence" value="ECO:0007669"/>
    <property type="project" value="UniProtKB-KW"/>
</dbReference>
<comment type="subcellular location">
    <subcellularLocation>
        <location>Secreted</location>
    </subcellularLocation>
</comment>
<comment type="tissue specificity">
    <text>Expressed by the skin glands.</text>
</comment>
<evidence type="ECO:0000269" key="1">
    <source ref="1"/>
</evidence>
<reference key="1">
    <citation type="journal article" date="1999" name="Aust. J. Chem.">
        <title>Peptides from the skin glands of the Australian buzzing tree frog Litori electrica. Comparison with the skin peptides from Litoria rubella.</title>
        <authorList>
            <person name="Wabnitz P.A."/>
            <person name="Bowie J.H."/>
            <person name="Tyler M.J."/>
            <person name="Wallace J.C."/>
        </authorList>
    </citation>
    <scope>PROTEIN SEQUENCE</scope>
    <scope>AMIDATION AT HIS-5</scope>
    <source>
        <tissue>Skin secretion</tissue>
    </source>
</reference>
<sequence length="5" mass="616">FITVH</sequence>
<name>EI04_LITRU</name>
<accession>P82100</accession>
<proteinExistence type="evidence at protein level"/>
<feature type="peptide" id="PRO_0000043795" description="Electrin-4">
    <location>
        <begin position="1"/>
        <end position="5"/>
    </location>
</feature>
<feature type="modified residue" description="Histidine amide" evidence="1">
    <location>
        <position position="5"/>
    </location>
</feature>